<reference evidence="6" key="1">
    <citation type="journal article" date="1998" name="Science">
        <title>Genome sequence of the nematode C. elegans: a platform for investigating biology.</title>
        <authorList>
            <consortium name="The C. elegans sequencing consortium"/>
        </authorList>
    </citation>
    <scope>NUCLEOTIDE SEQUENCE [LARGE SCALE GENOMIC DNA]</scope>
    <scope>ALTERNATIVE SPLICING</scope>
    <source>
        <strain evidence="6">Bristol N2</strain>
    </source>
</reference>
<reference key="2">
    <citation type="journal article" date="2013" name="PLoS Genet.">
        <title>Dietary restriction induced longevity is mediated by nuclear receptor NHR-62 in Caenorhabditis elegans.</title>
        <authorList>
            <person name="Heestand B.N."/>
            <person name="Shen Y."/>
            <person name="Liu W."/>
            <person name="Magner D.B."/>
            <person name="Storm N."/>
            <person name="Meharg C."/>
            <person name="Habermann B."/>
            <person name="Antebi A."/>
        </authorList>
    </citation>
    <scope>FUNCTION</scope>
    <scope>SUBCELLULAR LOCATION</scope>
    <scope>TISSUE SPECIFICITY</scope>
    <scope>DEVELOPMENTAL STAGE</scope>
    <scope>DISRUPTION PHENOTYPE</scope>
</reference>
<keyword id="KW-0025">Alternative splicing</keyword>
<keyword id="KW-0238">DNA-binding</keyword>
<keyword id="KW-0479">Metal-binding</keyword>
<keyword id="KW-0539">Nucleus</keyword>
<keyword id="KW-0675">Receptor</keyword>
<keyword id="KW-1185">Reference proteome</keyword>
<keyword id="KW-0804">Transcription</keyword>
<keyword id="KW-0805">Transcription regulation</keyword>
<keyword id="KW-0862">Zinc</keyword>
<keyword id="KW-0863">Zinc-finger</keyword>
<proteinExistence type="evidence at transcript level"/>
<gene>
    <name type="primary">nhr-62</name>
    <name type="ORF">Y67A6A.2</name>
</gene>
<accession>O02279</accession>
<accession>B3WFY6</accession>
<feature type="chain" id="PRO_0000223579" description="Nuclear hormone receptor family member nhr-62">
    <location>
        <begin position="1"/>
        <end position="515"/>
    </location>
</feature>
<feature type="domain" description="NR LBD" evidence="2">
    <location>
        <begin position="225"/>
        <end position="509"/>
    </location>
</feature>
<feature type="DNA-binding region" description="Nuclear receptor" evidence="1">
    <location>
        <begin position="95"/>
        <end position="170"/>
    </location>
</feature>
<feature type="zinc finger region" description="NR C4-type" evidence="1">
    <location>
        <begin position="98"/>
        <end position="118"/>
    </location>
</feature>
<feature type="zinc finger region" description="NR C4-type" evidence="1">
    <location>
        <begin position="134"/>
        <end position="153"/>
    </location>
</feature>
<feature type="region of interest" description="Disordered" evidence="3">
    <location>
        <begin position="169"/>
        <end position="195"/>
    </location>
</feature>
<feature type="region of interest" description="AF-2" evidence="2">
    <location>
        <begin position="498"/>
        <end position="509"/>
    </location>
</feature>
<feature type="splice variant" id="VSP_053632" description="In isoform b." evidence="5">
    <location>
        <begin position="1"/>
        <end position="162"/>
    </location>
</feature>
<evidence type="ECO:0000255" key="1">
    <source>
        <dbReference type="PROSITE-ProRule" id="PRU00407"/>
    </source>
</evidence>
<evidence type="ECO:0000255" key="2">
    <source>
        <dbReference type="PROSITE-ProRule" id="PRU01189"/>
    </source>
</evidence>
<evidence type="ECO:0000256" key="3">
    <source>
        <dbReference type="SAM" id="MobiDB-lite"/>
    </source>
</evidence>
<evidence type="ECO:0000269" key="4">
    <source>
    </source>
</evidence>
<evidence type="ECO:0000305" key="5"/>
<evidence type="ECO:0000312" key="6">
    <source>
        <dbReference type="Proteomes" id="UP000001940"/>
    </source>
</evidence>
<protein>
    <recommendedName>
        <fullName>Nuclear hormone receptor family member nhr-62</fullName>
    </recommendedName>
</protein>
<sequence length="515" mass="58070">MFSTLSPSAIDDILRHAVHFGQGTTAIAPSPVTFISTTTQQSLGATYPGVFNPTTPTFNHYQHQALPVTMHTSTSSAHHTTTGHGRGRRKNSTINLVCVVCGDQAFGKHYGVNACNGCKGFFRRSVWHNRQYLCRFEGRCAIAKEHRNVCRACRLKQCFVAGMNPRAVQSERVEREQNGSPNQIEEDDYKDLSSPDTCSVEIQTDVDEQKPSSNNSAPLPSMELEMAKLSEQIVEMHRAVCSYVDPVTKRENFDMKMETETTKIAFMNAFYNPEMIGPRTPLDITGRRVATVKDVMDEWKRNFVLFSDWLRALPEYNQMSIEDQIVLAKNRYGTFHWWMCANWTVQAGCEGVCYSNGAYFPKQPEAQCIPDVKGSSGRMYDSLSIPIKELNLDETEIVLMLAVIIFSDEITELADLTPAGKEHVRMVGNRFVRMLHHHVNSKEYGEAMENGDDTQNSSESQAAVRIAKMMILLSATTNLVYLTSDNIQLMEVLHVVPSEYLCHEVQFIQNSYETP</sequence>
<name>NHR62_CAEEL</name>
<comment type="function">
    <text evidence="4">Orphan nuclear hormone receptor (PubMed:23935515). Required for metabolic and physiologic responses associated with dietary-restriction-induced longevity (PubMed:23935515). Modulates triglyceride and lipid metabolism and autophagy, associated with dietary-restriction, probably acting via regulation of transcription of target genes (PubMed:23935515).</text>
</comment>
<comment type="subcellular location">
    <subcellularLocation>
        <location evidence="1 4">Nucleus</location>
    </subcellularLocation>
</comment>
<comment type="alternative products">
    <event type="alternative splicing"/>
    <isoform>
        <id>O02279-1</id>
        <name>a</name>
        <sequence type="displayed"/>
    </isoform>
    <isoform>
        <id>O02279-2</id>
        <name>b</name>
        <sequence type="described" ref="VSP_053632"/>
    </isoform>
</comment>
<comment type="tissue specificity">
    <text evidence="4">Widely expressed at a low level in many tissues including the pharynx, sensory neurons, intestine, spermatheca, hypodermis, and excretory cell.</text>
</comment>
<comment type="developmental stage">
    <text evidence="4">Expressed from embryo to adult in the pharynx and intestine.</text>
</comment>
<comment type="disruption phenotype">
    <text evidence="4">RNAi-mediated knockdown suppresses the longevity caused by an eat-2 mutant background.</text>
</comment>
<comment type="similarity">
    <text evidence="5">Belongs to the nuclear hormone receptor family.</text>
</comment>
<dbReference type="EMBL" id="AL032645">
    <property type="protein sequence ID" value="CAA21675.2"/>
    <property type="molecule type" value="Genomic_DNA"/>
</dbReference>
<dbReference type="EMBL" id="Z83235">
    <property type="protein sequence ID" value="CAA21675.2"/>
    <property type="status" value="JOINED"/>
    <property type="molecule type" value="Genomic_DNA"/>
</dbReference>
<dbReference type="EMBL" id="Z83235">
    <property type="protein sequence ID" value="CAQ76486.1"/>
    <property type="molecule type" value="Genomic_DNA"/>
</dbReference>
<dbReference type="PIR" id="T23558">
    <property type="entry name" value="T23558"/>
</dbReference>
<dbReference type="RefSeq" id="NP_001129799.1">
    <molecule id="O02279-2"/>
    <property type="nucleotide sequence ID" value="NM_001136327.4"/>
</dbReference>
<dbReference type="RefSeq" id="NP_492607.1">
    <molecule id="O02279-1"/>
    <property type="nucleotide sequence ID" value="NM_060206.8"/>
</dbReference>
<dbReference type="SMR" id="O02279"/>
<dbReference type="BioGRID" id="38259">
    <property type="interactions" value="9"/>
</dbReference>
<dbReference type="FunCoup" id="O02279">
    <property type="interactions" value="2"/>
</dbReference>
<dbReference type="IntAct" id="O02279">
    <property type="interactions" value="9"/>
</dbReference>
<dbReference type="STRING" id="6239.Y67A6A.2a.1"/>
<dbReference type="PaxDb" id="6239-Y67A6A.2a"/>
<dbReference type="PeptideAtlas" id="O02279"/>
<dbReference type="EnsemblMetazoa" id="Y67A6A.2a.1">
    <molecule id="O02279-1"/>
    <property type="protein sequence ID" value="Y67A6A.2a.1"/>
    <property type="gene ID" value="WBGene00003652"/>
</dbReference>
<dbReference type="EnsemblMetazoa" id="Y67A6A.2b.1">
    <molecule id="O02279-2"/>
    <property type="protein sequence ID" value="Y67A6A.2b.1"/>
    <property type="gene ID" value="WBGene00003652"/>
</dbReference>
<dbReference type="GeneID" id="172836"/>
<dbReference type="KEGG" id="cel:CELE_Y67A6A.2"/>
<dbReference type="UCSC" id="Y67A6A.2">
    <molecule id="O02279-1"/>
    <property type="organism name" value="c. elegans"/>
</dbReference>
<dbReference type="AGR" id="WB:WBGene00003652"/>
<dbReference type="CTD" id="172836"/>
<dbReference type="WormBase" id="Y67A6A.2a">
    <molecule id="O02279-1"/>
    <property type="protein sequence ID" value="CE27305"/>
    <property type="gene ID" value="WBGene00003652"/>
    <property type="gene designation" value="nhr-62"/>
</dbReference>
<dbReference type="WormBase" id="Y67A6A.2b">
    <molecule id="O02279-2"/>
    <property type="protein sequence ID" value="CE42745"/>
    <property type="gene ID" value="WBGene00003652"/>
    <property type="gene designation" value="nhr-62"/>
</dbReference>
<dbReference type="eggNOG" id="KOG3575">
    <property type="taxonomic scope" value="Eukaryota"/>
</dbReference>
<dbReference type="HOGENOM" id="CLU_007368_3_3_1"/>
<dbReference type="InParanoid" id="O02279"/>
<dbReference type="OMA" id="CAIAKEH"/>
<dbReference type="OrthoDB" id="5817395at2759"/>
<dbReference type="PhylomeDB" id="O02279"/>
<dbReference type="SignaLink" id="O02279"/>
<dbReference type="PRO" id="PR:O02279"/>
<dbReference type="Proteomes" id="UP000001940">
    <property type="component" value="Chromosome I"/>
</dbReference>
<dbReference type="Bgee" id="WBGene00003652">
    <property type="expression patterns" value="Expressed in pharyngeal muscle cell (C elegans) and 3 other cell types or tissues"/>
</dbReference>
<dbReference type="ExpressionAtlas" id="O02279">
    <property type="expression patterns" value="baseline and differential"/>
</dbReference>
<dbReference type="GO" id="GO:0005634">
    <property type="term" value="C:nucleus"/>
    <property type="evidence" value="ECO:0007669"/>
    <property type="project" value="UniProtKB-SubCell"/>
</dbReference>
<dbReference type="GO" id="GO:0003700">
    <property type="term" value="F:DNA-binding transcription factor activity"/>
    <property type="evidence" value="ECO:0007669"/>
    <property type="project" value="InterPro"/>
</dbReference>
<dbReference type="GO" id="GO:0000978">
    <property type="term" value="F:RNA polymerase II cis-regulatory region sequence-specific DNA binding"/>
    <property type="evidence" value="ECO:0007669"/>
    <property type="project" value="InterPro"/>
</dbReference>
<dbReference type="GO" id="GO:0008270">
    <property type="term" value="F:zinc ion binding"/>
    <property type="evidence" value="ECO:0007669"/>
    <property type="project" value="UniProtKB-KW"/>
</dbReference>
<dbReference type="GO" id="GO:0006914">
    <property type="term" value="P:autophagy"/>
    <property type="evidence" value="ECO:0000316"/>
    <property type="project" value="UniProtKB"/>
</dbReference>
<dbReference type="GO" id="GO:0006629">
    <property type="term" value="P:lipid metabolic process"/>
    <property type="evidence" value="ECO:0000315"/>
    <property type="project" value="UniProtKB"/>
</dbReference>
<dbReference type="GO" id="GO:0006355">
    <property type="term" value="P:regulation of DNA-templated transcription"/>
    <property type="evidence" value="ECO:0000315"/>
    <property type="project" value="UniProtKB"/>
</dbReference>
<dbReference type="GO" id="GO:0042594">
    <property type="term" value="P:response to starvation"/>
    <property type="evidence" value="ECO:0000315"/>
    <property type="project" value="UniProtKB"/>
</dbReference>
<dbReference type="GO" id="GO:0006641">
    <property type="term" value="P:triglyceride metabolic process"/>
    <property type="evidence" value="ECO:0000316"/>
    <property type="project" value="UniProtKB"/>
</dbReference>
<dbReference type="CDD" id="cd06960">
    <property type="entry name" value="NR_DBD_HNF4A"/>
    <property type="match status" value="1"/>
</dbReference>
<dbReference type="CDD" id="cd06157">
    <property type="entry name" value="NR_LBD"/>
    <property type="match status" value="1"/>
</dbReference>
<dbReference type="FunFam" id="3.30.50.10:FF:000030">
    <property type="entry name" value="Nuclear Hormone Receptor family"/>
    <property type="match status" value="1"/>
</dbReference>
<dbReference type="Gene3D" id="3.30.50.10">
    <property type="entry name" value="Erythroid Transcription Factor GATA-1, subunit A"/>
    <property type="match status" value="1"/>
</dbReference>
<dbReference type="Gene3D" id="1.10.565.10">
    <property type="entry name" value="Retinoid X Receptor"/>
    <property type="match status" value="1"/>
</dbReference>
<dbReference type="InterPro" id="IPR052499">
    <property type="entry name" value="C.elegans_NHRs"/>
</dbReference>
<dbReference type="InterPro" id="IPR049636">
    <property type="entry name" value="HNF4-like_DBD"/>
</dbReference>
<dbReference type="InterPro" id="IPR035500">
    <property type="entry name" value="NHR-like_dom_sf"/>
</dbReference>
<dbReference type="InterPro" id="IPR000536">
    <property type="entry name" value="Nucl_hrmn_rcpt_lig-bd"/>
</dbReference>
<dbReference type="InterPro" id="IPR001723">
    <property type="entry name" value="Nuclear_hrmn_rcpt"/>
</dbReference>
<dbReference type="InterPro" id="IPR001628">
    <property type="entry name" value="Znf_hrmn_rcpt"/>
</dbReference>
<dbReference type="InterPro" id="IPR013088">
    <property type="entry name" value="Znf_NHR/GATA"/>
</dbReference>
<dbReference type="PANTHER" id="PTHR47630:SF4">
    <property type="entry name" value="NUCLEAR HORMONE RECEPTOR FAMILY MEMBER NHR-62"/>
    <property type="match status" value="1"/>
</dbReference>
<dbReference type="PANTHER" id="PTHR47630">
    <property type="entry name" value="NUCLEAR HORMONE RECEPTOR FAMILY-RELATED-RELATED"/>
    <property type="match status" value="1"/>
</dbReference>
<dbReference type="Pfam" id="PF00104">
    <property type="entry name" value="Hormone_recep"/>
    <property type="match status" value="1"/>
</dbReference>
<dbReference type="Pfam" id="PF00105">
    <property type="entry name" value="zf-C4"/>
    <property type="match status" value="1"/>
</dbReference>
<dbReference type="PRINTS" id="PR00398">
    <property type="entry name" value="STRDHORMONER"/>
</dbReference>
<dbReference type="PRINTS" id="PR00047">
    <property type="entry name" value="STROIDFINGER"/>
</dbReference>
<dbReference type="SMART" id="SM00430">
    <property type="entry name" value="HOLI"/>
    <property type="match status" value="1"/>
</dbReference>
<dbReference type="SMART" id="SM00399">
    <property type="entry name" value="ZnF_C4"/>
    <property type="match status" value="1"/>
</dbReference>
<dbReference type="SUPFAM" id="SSF57716">
    <property type="entry name" value="Glucocorticoid receptor-like (DNA-binding domain)"/>
    <property type="match status" value="1"/>
</dbReference>
<dbReference type="SUPFAM" id="SSF48508">
    <property type="entry name" value="Nuclear receptor ligand-binding domain"/>
    <property type="match status" value="1"/>
</dbReference>
<dbReference type="PROSITE" id="PS51843">
    <property type="entry name" value="NR_LBD"/>
    <property type="match status" value="1"/>
</dbReference>
<dbReference type="PROSITE" id="PS00031">
    <property type="entry name" value="NUCLEAR_REC_DBD_1"/>
    <property type="match status" value="1"/>
</dbReference>
<dbReference type="PROSITE" id="PS51030">
    <property type="entry name" value="NUCLEAR_REC_DBD_2"/>
    <property type="match status" value="1"/>
</dbReference>
<organism evidence="6">
    <name type="scientific">Caenorhabditis elegans</name>
    <dbReference type="NCBI Taxonomy" id="6239"/>
    <lineage>
        <taxon>Eukaryota</taxon>
        <taxon>Metazoa</taxon>
        <taxon>Ecdysozoa</taxon>
        <taxon>Nematoda</taxon>
        <taxon>Chromadorea</taxon>
        <taxon>Rhabditida</taxon>
        <taxon>Rhabditina</taxon>
        <taxon>Rhabditomorpha</taxon>
        <taxon>Rhabditoidea</taxon>
        <taxon>Rhabditidae</taxon>
        <taxon>Peloderinae</taxon>
        <taxon>Caenorhabditis</taxon>
    </lineage>
</organism>